<keyword id="KW-0456">Lyase</keyword>
<keyword id="KW-0460">Magnesium</keyword>
<keyword id="KW-0479">Metal-binding</keyword>
<accession>A6TBU8</accession>
<sequence>MTLPKIKHVRAWFIGGATAEQGAGGGDYHDQGANHWIDDHIATPMSKYKQYEQSRQSFGINVLGTLIVEVEADNGQTGFAVSTAGEMGCFIVEKHLNRFIEGKCVSDIKLIHDQMLNATLYYAGSGGLVMNTISCVDLALWDLFGKVVGLPVYKLLGGAVRDEIQFYATGARPDLAQEMGFIGGKMPTHWGPHDGDAGIRKDVAMVADMREKCGPDFWLMLDCWMSQDVNYATKLAHACAPYNLKWIEECLPPQQYEGYRELKRQAPAGMMVTSGEHHGTLQSFRTLSETGIDIMQPDVGWCGGLTTLVEIAAIAKARGQLVVPHGSSVYSHHAVITFTNTPFSEFLMTSPDCATLRPQFDPILLGEPVPERGRIHKSVLDKPGFGVELNRDCNLKRPYQH</sequence>
<proteinExistence type="inferred from homology"/>
<gene>
    <name evidence="1" type="primary">rhmD</name>
    <name type="ordered locus">KPN78578_26080</name>
    <name type="ORF">KPN_02652</name>
</gene>
<feature type="chain" id="PRO_0000351700" description="L-rhamnonate dehydratase">
    <location>
        <begin position="1"/>
        <end position="401"/>
    </location>
</feature>
<feature type="active site" description="Proton acceptor" evidence="1">
    <location>
        <position position="325"/>
    </location>
</feature>
<feature type="binding site" evidence="1">
    <location>
        <position position="29"/>
    </location>
    <ligand>
        <name>substrate</name>
    </ligand>
</feature>
<feature type="binding site" evidence="1">
    <location>
        <position position="55"/>
    </location>
    <ligand>
        <name>substrate</name>
    </ligand>
</feature>
<feature type="binding site" evidence="1">
    <location>
        <position position="222"/>
    </location>
    <ligand>
        <name>Mg(2+)</name>
        <dbReference type="ChEBI" id="CHEBI:18420"/>
    </ligand>
</feature>
<feature type="binding site" evidence="1">
    <location>
        <position position="248"/>
    </location>
    <ligand>
        <name>Mg(2+)</name>
        <dbReference type="ChEBI" id="CHEBI:18420"/>
    </ligand>
</feature>
<feature type="binding site" evidence="1">
    <location>
        <position position="276"/>
    </location>
    <ligand>
        <name>Mg(2+)</name>
        <dbReference type="ChEBI" id="CHEBI:18420"/>
    </ligand>
</feature>
<feature type="binding site" evidence="1">
    <location>
        <position position="345"/>
    </location>
    <ligand>
        <name>substrate</name>
    </ligand>
</feature>
<feature type="site" description="Increases basicity of active site His" evidence="1">
    <location>
        <position position="298"/>
    </location>
</feature>
<feature type="site" description="Transition state stabilizer" evidence="1">
    <location>
        <position position="345"/>
    </location>
</feature>
<protein>
    <recommendedName>
        <fullName evidence="1">L-rhamnonate dehydratase</fullName>
        <shortName evidence="1">RhamD</shortName>
        <ecNumber evidence="1">4.2.1.90</ecNumber>
    </recommendedName>
</protein>
<name>RHMD_KLEP7</name>
<dbReference type="EC" id="4.2.1.90" evidence="1"/>
<dbReference type="EMBL" id="CP000647">
    <property type="protein sequence ID" value="ABR78069.1"/>
    <property type="molecule type" value="Genomic_DNA"/>
</dbReference>
<dbReference type="RefSeq" id="WP_004175029.1">
    <property type="nucleotide sequence ID" value="NC_009648.1"/>
</dbReference>
<dbReference type="SMR" id="A6TBU8"/>
<dbReference type="STRING" id="272620.KPN_02652"/>
<dbReference type="PaxDb" id="272620-KPN_02652"/>
<dbReference type="EnsemblBacteria" id="ABR78069">
    <property type="protein sequence ID" value="ABR78069"/>
    <property type="gene ID" value="KPN_02652"/>
</dbReference>
<dbReference type="KEGG" id="kpn:KPN_02652"/>
<dbReference type="HOGENOM" id="CLU_030273_1_0_6"/>
<dbReference type="Proteomes" id="UP000000265">
    <property type="component" value="Chromosome"/>
</dbReference>
<dbReference type="GO" id="GO:0050032">
    <property type="term" value="F:L-rhamnonate dehydratase activity"/>
    <property type="evidence" value="ECO:0007669"/>
    <property type="project" value="UniProtKB-UniRule"/>
</dbReference>
<dbReference type="GO" id="GO:0000287">
    <property type="term" value="F:magnesium ion binding"/>
    <property type="evidence" value="ECO:0007669"/>
    <property type="project" value="UniProtKB-UniRule"/>
</dbReference>
<dbReference type="GO" id="GO:0009063">
    <property type="term" value="P:amino acid catabolic process"/>
    <property type="evidence" value="ECO:0007669"/>
    <property type="project" value="InterPro"/>
</dbReference>
<dbReference type="GO" id="GO:0016052">
    <property type="term" value="P:carbohydrate catabolic process"/>
    <property type="evidence" value="ECO:0007669"/>
    <property type="project" value="TreeGrafter"/>
</dbReference>
<dbReference type="CDD" id="cd03327">
    <property type="entry name" value="MR_like_2"/>
    <property type="match status" value="1"/>
</dbReference>
<dbReference type="FunFam" id="3.30.390.10:FF:000007">
    <property type="entry name" value="L-rhamnonate dehydratase"/>
    <property type="match status" value="1"/>
</dbReference>
<dbReference type="FunFam" id="3.20.20.120:FF:000005">
    <property type="entry name" value="Putative L-rhamnonate dehydratase"/>
    <property type="match status" value="1"/>
</dbReference>
<dbReference type="Gene3D" id="3.20.20.120">
    <property type="entry name" value="Enolase-like C-terminal domain"/>
    <property type="match status" value="1"/>
</dbReference>
<dbReference type="Gene3D" id="3.30.390.10">
    <property type="entry name" value="Enolase-like, N-terminal domain"/>
    <property type="match status" value="1"/>
</dbReference>
<dbReference type="HAMAP" id="MF_01288">
    <property type="entry name" value="Rhamnon_dehydrat"/>
    <property type="match status" value="1"/>
</dbReference>
<dbReference type="InterPro" id="IPR036849">
    <property type="entry name" value="Enolase-like_C_sf"/>
</dbReference>
<dbReference type="InterPro" id="IPR029017">
    <property type="entry name" value="Enolase-like_N"/>
</dbReference>
<dbReference type="InterPro" id="IPR029065">
    <property type="entry name" value="Enolase_C-like"/>
</dbReference>
<dbReference type="InterPro" id="IPR023444">
    <property type="entry name" value="L-Rhamnon_dehydrat"/>
</dbReference>
<dbReference type="InterPro" id="IPR018110">
    <property type="entry name" value="Mandel_Rmase/mucon_lact_enz_CS"/>
</dbReference>
<dbReference type="InterPro" id="IPR013342">
    <property type="entry name" value="Mandelate_racemase_C"/>
</dbReference>
<dbReference type="InterPro" id="IPR013341">
    <property type="entry name" value="Mandelate_racemase_N_dom"/>
</dbReference>
<dbReference type="InterPro" id="IPR046945">
    <property type="entry name" value="RHMD-like"/>
</dbReference>
<dbReference type="NCBIfam" id="NF011968">
    <property type="entry name" value="PRK15440.1"/>
    <property type="match status" value="1"/>
</dbReference>
<dbReference type="PANTHER" id="PTHR13794">
    <property type="entry name" value="ENOLASE SUPERFAMILY, MANDELATE RACEMASE"/>
    <property type="match status" value="1"/>
</dbReference>
<dbReference type="PANTHER" id="PTHR13794:SF58">
    <property type="entry name" value="MITOCHONDRIAL ENOLASE SUPERFAMILY MEMBER 1"/>
    <property type="match status" value="1"/>
</dbReference>
<dbReference type="Pfam" id="PF13378">
    <property type="entry name" value="MR_MLE_C"/>
    <property type="match status" value="1"/>
</dbReference>
<dbReference type="Pfam" id="PF02746">
    <property type="entry name" value="MR_MLE_N"/>
    <property type="match status" value="1"/>
</dbReference>
<dbReference type="SFLD" id="SFLDS00001">
    <property type="entry name" value="Enolase"/>
    <property type="match status" value="1"/>
</dbReference>
<dbReference type="SFLD" id="SFLDF00006">
    <property type="entry name" value="rhamnonate_dehydratase"/>
    <property type="match status" value="1"/>
</dbReference>
<dbReference type="SMART" id="SM00922">
    <property type="entry name" value="MR_MLE"/>
    <property type="match status" value="1"/>
</dbReference>
<dbReference type="SUPFAM" id="SSF51604">
    <property type="entry name" value="Enolase C-terminal domain-like"/>
    <property type="match status" value="1"/>
</dbReference>
<dbReference type="SUPFAM" id="SSF54826">
    <property type="entry name" value="Enolase N-terminal domain-like"/>
    <property type="match status" value="1"/>
</dbReference>
<dbReference type="PROSITE" id="PS00908">
    <property type="entry name" value="MR_MLE_1"/>
    <property type="match status" value="1"/>
</dbReference>
<comment type="function">
    <text evidence="1">Catalyzes the dehydration of L-rhamnonate to 2-keto-3-deoxy-L-rhamnonate (KDR).</text>
</comment>
<comment type="catalytic activity">
    <reaction evidence="1">
        <text>L-rhamnonate = 2-dehydro-3-deoxy-L-rhamnonate + H2O</text>
        <dbReference type="Rhea" id="RHEA:23080"/>
        <dbReference type="ChEBI" id="CHEBI:15377"/>
        <dbReference type="ChEBI" id="CHEBI:58118"/>
        <dbReference type="ChEBI" id="CHEBI:58371"/>
        <dbReference type="EC" id="4.2.1.90"/>
    </reaction>
</comment>
<comment type="cofactor">
    <cofactor evidence="1">
        <name>Mg(2+)</name>
        <dbReference type="ChEBI" id="CHEBI:18420"/>
    </cofactor>
    <text evidence="1">Binds 1 Mg(2+) ion per subunit.</text>
</comment>
<comment type="subunit">
    <text evidence="1">Homooctamer; tetramer of dimers.</text>
</comment>
<comment type="miscellaneous">
    <text evidence="1">Reaction proceeds via a syn dehydration.</text>
</comment>
<comment type="similarity">
    <text evidence="1">Belongs to the mandelate racemase/muconate lactonizing enzyme family. RhamD subfamily.</text>
</comment>
<evidence type="ECO:0000255" key="1">
    <source>
        <dbReference type="HAMAP-Rule" id="MF_01288"/>
    </source>
</evidence>
<organism>
    <name type="scientific">Klebsiella pneumoniae subsp. pneumoniae (strain ATCC 700721 / MGH 78578)</name>
    <dbReference type="NCBI Taxonomy" id="272620"/>
    <lineage>
        <taxon>Bacteria</taxon>
        <taxon>Pseudomonadati</taxon>
        <taxon>Pseudomonadota</taxon>
        <taxon>Gammaproteobacteria</taxon>
        <taxon>Enterobacterales</taxon>
        <taxon>Enterobacteriaceae</taxon>
        <taxon>Klebsiella/Raoultella group</taxon>
        <taxon>Klebsiella</taxon>
        <taxon>Klebsiella pneumoniae complex</taxon>
    </lineage>
</organism>
<reference key="1">
    <citation type="submission" date="2006-09" db="EMBL/GenBank/DDBJ databases">
        <authorList>
            <consortium name="The Klebsiella pneumonia Genome Sequencing Project"/>
            <person name="McClelland M."/>
            <person name="Sanderson E.K."/>
            <person name="Spieth J."/>
            <person name="Clifton W.S."/>
            <person name="Latreille P."/>
            <person name="Sabo A."/>
            <person name="Pepin K."/>
            <person name="Bhonagiri V."/>
            <person name="Porwollik S."/>
            <person name="Ali J."/>
            <person name="Wilson R.K."/>
        </authorList>
    </citation>
    <scope>NUCLEOTIDE SEQUENCE [LARGE SCALE GENOMIC DNA]</scope>
    <source>
        <strain>ATCC 700721 / MGH 78578</strain>
    </source>
</reference>